<protein>
    <recommendedName>
        <fullName>UPF0177 protein in abiGi 5'region</fullName>
    </recommendedName>
    <alternativeName>
        <fullName>orfX</fullName>
    </alternativeName>
</protein>
<name>ABGX_LACLC</name>
<feature type="chain" id="PRO_0000220574" description="UPF0177 protein in abiGi 5'region">
    <location>
        <begin position="1"/>
        <end position="232"/>
    </location>
</feature>
<feature type="transmembrane region" description="Helical" evidence="1">
    <location>
        <begin position="12"/>
        <end position="32"/>
    </location>
</feature>
<feature type="transmembrane region" description="Helical" evidence="1">
    <location>
        <begin position="47"/>
        <end position="67"/>
    </location>
</feature>
<feature type="transmembrane region" description="Helical" evidence="1">
    <location>
        <begin position="86"/>
        <end position="106"/>
    </location>
</feature>
<feature type="transmembrane region" description="Helical" evidence="1">
    <location>
        <begin position="124"/>
        <end position="144"/>
    </location>
</feature>
<feature type="transmembrane region" description="Helical" evidence="1">
    <location>
        <begin position="165"/>
        <end position="185"/>
    </location>
</feature>
<feature type="transmembrane region" description="Helical" evidence="1">
    <location>
        <begin position="206"/>
        <end position="226"/>
    </location>
</feature>
<sequence length="232" mass="26967">MIKNHWMKKLKYLSLFFLLFAIYWFPDVILAYPEVYLKSLVGYERQVVATWIFLGNMSISLFLGILICYKLGYYKNTISIFKIKNLLFLLITTIILFVIYFFSYTYYNSHFITPGIAKTQAAFSIQIVFPFVQFITIAICAPIFEEASFRTTIYSFFKNDKIAYIVSCVGFAWMHTGPNPILIVYLPMSIVLTSIYHRRRVLGESILVHGVFNALLPIVIPLLQVITGLYYL</sequence>
<organism>
    <name type="scientific">Lactococcus lactis subsp. cremoris</name>
    <name type="common">Streptococcus cremoris</name>
    <dbReference type="NCBI Taxonomy" id="1359"/>
    <lineage>
        <taxon>Bacteria</taxon>
        <taxon>Bacillati</taxon>
        <taxon>Bacillota</taxon>
        <taxon>Bacilli</taxon>
        <taxon>Lactobacillales</taxon>
        <taxon>Streptococcaceae</taxon>
        <taxon>Lactococcus</taxon>
    </lineage>
</organism>
<dbReference type="EMBL" id="U60336">
    <property type="protein sequence ID" value="AAB38311.1"/>
    <property type="molecule type" value="Genomic_DNA"/>
</dbReference>
<dbReference type="RefSeq" id="WP_015081755.1">
    <property type="nucleotide sequence ID" value="NZ_WJUX01000040.1"/>
</dbReference>
<dbReference type="SMR" id="Q48724"/>
<dbReference type="GO" id="GO:0005886">
    <property type="term" value="C:plasma membrane"/>
    <property type="evidence" value="ECO:0007669"/>
    <property type="project" value="UniProtKB-SubCell"/>
</dbReference>
<dbReference type="GO" id="GO:0004175">
    <property type="term" value="F:endopeptidase activity"/>
    <property type="evidence" value="ECO:0007669"/>
    <property type="project" value="UniProtKB-ARBA"/>
</dbReference>
<dbReference type="GO" id="GO:0080120">
    <property type="term" value="P:CAAX-box protein maturation"/>
    <property type="evidence" value="ECO:0007669"/>
    <property type="project" value="UniProtKB-ARBA"/>
</dbReference>
<dbReference type="InterPro" id="IPR003675">
    <property type="entry name" value="Rce1/LyrA-like_dom"/>
</dbReference>
<dbReference type="Pfam" id="PF02517">
    <property type="entry name" value="Rce1-like"/>
    <property type="match status" value="1"/>
</dbReference>
<geneLocation type="plasmid">
    <name>pCI750</name>
</geneLocation>
<comment type="function">
    <text>The function of this protein is currently unknown, but it has been shown that it is not necessary for phage resistance.</text>
</comment>
<comment type="subcellular location">
    <subcellularLocation>
        <location evidence="2">Cell membrane</location>
        <topology evidence="2">Multi-pass membrane protein</topology>
    </subcellularLocation>
</comment>
<comment type="similarity">
    <text evidence="2">Belongs to the UPF0177 family.</text>
</comment>
<reference key="1">
    <citation type="journal article" date="1996" name="Appl. Environ. Microbiol.">
        <title>AbiG, a genotypically novel abortive infection mechanism encoded by plasmid pCI750 of Lactococcus lactis subsp. cremoris UC653.</title>
        <authorList>
            <person name="O'Connor L."/>
            <person name="Coffey A."/>
            <person name="Daly C."/>
            <person name="Fitzgerald G.F."/>
        </authorList>
    </citation>
    <scope>NUCLEOTIDE SEQUENCE [GENOMIC DNA]</scope>
    <source>
        <strain>UC653</strain>
    </source>
</reference>
<proteinExistence type="inferred from homology"/>
<accession>Q48724</accession>
<keyword id="KW-1003">Cell membrane</keyword>
<keyword id="KW-0472">Membrane</keyword>
<keyword id="KW-0614">Plasmid</keyword>
<keyword id="KW-0812">Transmembrane</keyword>
<keyword id="KW-1133">Transmembrane helix</keyword>
<evidence type="ECO:0000255" key="1"/>
<evidence type="ECO:0000305" key="2"/>